<name>TRMD_WOLTR</name>
<feature type="chain" id="PRO_0000060498" description="tRNA (guanine-N(1)-)-methyltransferase">
    <location>
        <begin position="1"/>
        <end position="235"/>
    </location>
</feature>
<feature type="binding site" evidence="1">
    <location>
        <position position="113"/>
    </location>
    <ligand>
        <name>S-adenosyl-L-methionine</name>
        <dbReference type="ChEBI" id="CHEBI:59789"/>
    </ligand>
</feature>
<feature type="binding site" evidence="1">
    <location>
        <begin position="133"/>
        <end position="138"/>
    </location>
    <ligand>
        <name>S-adenosyl-L-methionine</name>
        <dbReference type="ChEBI" id="CHEBI:59789"/>
    </ligand>
</feature>
<organism>
    <name type="scientific">Wolbachia sp. subsp. Brugia malayi (strain TRS)</name>
    <dbReference type="NCBI Taxonomy" id="292805"/>
    <lineage>
        <taxon>Bacteria</taxon>
        <taxon>Pseudomonadati</taxon>
        <taxon>Pseudomonadota</taxon>
        <taxon>Alphaproteobacteria</taxon>
        <taxon>Rickettsiales</taxon>
        <taxon>Anaplasmataceae</taxon>
        <taxon>Wolbachieae</taxon>
        <taxon>Wolbachia</taxon>
    </lineage>
</organism>
<accession>Q5GT55</accession>
<proteinExistence type="inferred from homology"/>
<gene>
    <name evidence="1" type="primary">trmD</name>
    <name type="ordered locus">Wbm0228</name>
</gene>
<reference key="1">
    <citation type="journal article" date="2005" name="PLoS Biol.">
        <title>The Wolbachia genome of Brugia malayi: endosymbiont evolution within a human pathogenic nematode.</title>
        <authorList>
            <person name="Foster J."/>
            <person name="Ganatra M."/>
            <person name="Kamal I."/>
            <person name="Ware J."/>
            <person name="Makarova K."/>
            <person name="Ivanova N."/>
            <person name="Bhattacharyya A."/>
            <person name="Kapatral V."/>
            <person name="Kumar S."/>
            <person name="Posfai J."/>
            <person name="Vincze T."/>
            <person name="Ingram J."/>
            <person name="Moran L."/>
            <person name="Lapidus A."/>
            <person name="Omelchenko M."/>
            <person name="Kyrpides N."/>
            <person name="Ghedin E."/>
            <person name="Wang S."/>
            <person name="Goltsman E."/>
            <person name="Joukov V."/>
            <person name="Ostrovskaya O."/>
            <person name="Tsukerman K."/>
            <person name="Mazur M."/>
            <person name="Comb D."/>
            <person name="Koonin E."/>
            <person name="Slatko B."/>
        </authorList>
    </citation>
    <scope>NUCLEOTIDE SEQUENCE [LARGE SCALE GENOMIC DNA]</scope>
    <source>
        <strain>TRS</strain>
    </source>
</reference>
<protein>
    <recommendedName>
        <fullName evidence="1">tRNA (guanine-N(1)-)-methyltransferase</fullName>
        <ecNumber evidence="1">2.1.1.228</ecNumber>
    </recommendedName>
    <alternativeName>
        <fullName evidence="1">M1G-methyltransferase</fullName>
    </alternativeName>
    <alternativeName>
        <fullName evidence="1">tRNA [GM37] methyltransferase</fullName>
    </alternativeName>
</protein>
<sequence>MFDVTILTIFPEMFPGFLNYSLAGKALEKKIWNLQVINIRFFAKDRHLTVDHIPYGGGAGMIMRPDVVGDAVDSVLSTHKDTKFIYMTPSGTKFDQSIARELVGFPHITILCGRFEGIDQRVIDEYTPYELSIGDYILSGGEPAAMVILDVCVRLLPGVVNNSGSITEESFSYSGGVLEYPQYTRPKQWRKHRVPKILLSGNHKKISDWRQKQSQVITKRRRPELLDGEINDKFT</sequence>
<keyword id="KW-0963">Cytoplasm</keyword>
<keyword id="KW-0489">Methyltransferase</keyword>
<keyword id="KW-1185">Reference proteome</keyword>
<keyword id="KW-0949">S-adenosyl-L-methionine</keyword>
<keyword id="KW-0808">Transferase</keyword>
<keyword id="KW-0819">tRNA processing</keyword>
<evidence type="ECO:0000255" key="1">
    <source>
        <dbReference type="HAMAP-Rule" id="MF_00605"/>
    </source>
</evidence>
<dbReference type="EC" id="2.1.1.228" evidence="1"/>
<dbReference type="EMBL" id="AE017321">
    <property type="protein sequence ID" value="AAW70819.1"/>
    <property type="molecule type" value="Genomic_DNA"/>
</dbReference>
<dbReference type="RefSeq" id="WP_011256429.1">
    <property type="nucleotide sequence ID" value="NC_006833.1"/>
</dbReference>
<dbReference type="SMR" id="Q5GT55"/>
<dbReference type="STRING" id="292805.Wbm0228"/>
<dbReference type="KEGG" id="wbm:Wbm0228"/>
<dbReference type="eggNOG" id="COG0336">
    <property type="taxonomic scope" value="Bacteria"/>
</dbReference>
<dbReference type="HOGENOM" id="CLU_047363_0_1_5"/>
<dbReference type="Proteomes" id="UP000000534">
    <property type="component" value="Chromosome"/>
</dbReference>
<dbReference type="GO" id="GO:0005829">
    <property type="term" value="C:cytosol"/>
    <property type="evidence" value="ECO:0007669"/>
    <property type="project" value="TreeGrafter"/>
</dbReference>
<dbReference type="GO" id="GO:0052906">
    <property type="term" value="F:tRNA (guanine(37)-N1)-methyltransferase activity"/>
    <property type="evidence" value="ECO:0007669"/>
    <property type="project" value="UniProtKB-UniRule"/>
</dbReference>
<dbReference type="GO" id="GO:0002939">
    <property type="term" value="P:tRNA N1-guanine methylation"/>
    <property type="evidence" value="ECO:0007669"/>
    <property type="project" value="TreeGrafter"/>
</dbReference>
<dbReference type="CDD" id="cd18080">
    <property type="entry name" value="TrmD-like"/>
    <property type="match status" value="1"/>
</dbReference>
<dbReference type="FunFam" id="3.40.1280.10:FF:000001">
    <property type="entry name" value="tRNA (guanine-N(1)-)-methyltransferase"/>
    <property type="match status" value="1"/>
</dbReference>
<dbReference type="Gene3D" id="3.40.1280.10">
    <property type="match status" value="1"/>
</dbReference>
<dbReference type="Gene3D" id="1.10.1270.20">
    <property type="entry name" value="tRNA(m1g37)methyltransferase, domain 2"/>
    <property type="match status" value="1"/>
</dbReference>
<dbReference type="HAMAP" id="MF_00605">
    <property type="entry name" value="TrmD"/>
    <property type="match status" value="1"/>
</dbReference>
<dbReference type="InterPro" id="IPR029028">
    <property type="entry name" value="Alpha/beta_knot_MTases"/>
</dbReference>
<dbReference type="InterPro" id="IPR023148">
    <property type="entry name" value="tRNA_m1G_MeTrfase_C_sf"/>
</dbReference>
<dbReference type="InterPro" id="IPR002649">
    <property type="entry name" value="tRNA_m1G_MeTrfase_TrmD"/>
</dbReference>
<dbReference type="InterPro" id="IPR029026">
    <property type="entry name" value="tRNA_m1G_MTases_N"/>
</dbReference>
<dbReference type="InterPro" id="IPR016009">
    <property type="entry name" value="tRNA_MeTrfase_TRMD/TRM10"/>
</dbReference>
<dbReference type="NCBIfam" id="NF000648">
    <property type="entry name" value="PRK00026.1"/>
    <property type="match status" value="1"/>
</dbReference>
<dbReference type="NCBIfam" id="TIGR00088">
    <property type="entry name" value="trmD"/>
    <property type="match status" value="1"/>
</dbReference>
<dbReference type="PANTHER" id="PTHR46417">
    <property type="entry name" value="TRNA (GUANINE-N(1)-)-METHYLTRANSFERASE"/>
    <property type="match status" value="1"/>
</dbReference>
<dbReference type="PANTHER" id="PTHR46417:SF1">
    <property type="entry name" value="TRNA (GUANINE-N(1)-)-METHYLTRANSFERASE"/>
    <property type="match status" value="1"/>
</dbReference>
<dbReference type="Pfam" id="PF01746">
    <property type="entry name" value="tRNA_m1G_MT"/>
    <property type="match status" value="1"/>
</dbReference>
<dbReference type="PIRSF" id="PIRSF000386">
    <property type="entry name" value="tRNA_mtase"/>
    <property type="match status" value="1"/>
</dbReference>
<dbReference type="SUPFAM" id="SSF75217">
    <property type="entry name" value="alpha/beta knot"/>
    <property type="match status" value="1"/>
</dbReference>
<comment type="function">
    <text evidence="1">Specifically methylates guanosine-37 in various tRNAs.</text>
</comment>
<comment type="catalytic activity">
    <reaction evidence="1">
        <text>guanosine(37) in tRNA + S-adenosyl-L-methionine = N(1)-methylguanosine(37) in tRNA + S-adenosyl-L-homocysteine + H(+)</text>
        <dbReference type="Rhea" id="RHEA:36899"/>
        <dbReference type="Rhea" id="RHEA-COMP:10145"/>
        <dbReference type="Rhea" id="RHEA-COMP:10147"/>
        <dbReference type="ChEBI" id="CHEBI:15378"/>
        <dbReference type="ChEBI" id="CHEBI:57856"/>
        <dbReference type="ChEBI" id="CHEBI:59789"/>
        <dbReference type="ChEBI" id="CHEBI:73542"/>
        <dbReference type="ChEBI" id="CHEBI:74269"/>
        <dbReference type="EC" id="2.1.1.228"/>
    </reaction>
</comment>
<comment type="subunit">
    <text evidence="1">Homodimer.</text>
</comment>
<comment type="subcellular location">
    <subcellularLocation>
        <location evidence="1">Cytoplasm</location>
    </subcellularLocation>
</comment>
<comment type="similarity">
    <text evidence="1">Belongs to the RNA methyltransferase TrmD family.</text>
</comment>